<accession>A4U7A9</accession>
<reference key="1">
    <citation type="submission" date="2007-04" db="EMBL/GenBank/DDBJ databases">
        <title>The NIAID influenza genome sequencing project.</title>
        <authorList>
            <person name="Spiro D."/>
            <person name="Sengamalay N."/>
            <person name="Boyne A."/>
            <person name="Bera J."/>
            <person name="Ghedin E."/>
            <person name="Zaborsky J."/>
            <person name="Subbu V."/>
            <person name="Sparenborg J."/>
            <person name="Gallagher T."/>
            <person name="Overton L."/>
            <person name="Althoff R."/>
            <person name="Liu X."/>
            <person name="Sitz J."/>
            <person name="Katzel D."/>
            <person name="Neupane R."/>
            <person name="Shumway M."/>
            <person name="Koo H."/>
            <person name="Griesemer S."/>
            <person name="StGeorge K."/>
            <person name="Bennett R."/>
            <person name="Taylor J."/>
            <person name="Bao Y."/>
            <person name="Bolotov P."/>
            <person name="Dernovoy D."/>
            <person name="Kiryutin B."/>
            <person name="Lipman D.J."/>
            <person name="Tatusova T."/>
        </authorList>
    </citation>
    <scope>NUCLEOTIDE SEQUENCE [GENOMIC RNA]</scope>
</reference>
<reference key="2">
    <citation type="submission" date="2007-04" db="EMBL/GenBank/DDBJ databases">
        <authorList>
            <consortium name="The NIAID Influenza Genome Sequencing Consortium"/>
        </authorList>
    </citation>
    <scope>NUCLEOTIDE SEQUENCE [GENOMIC RNA]</scope>
</reference>
<sequence length="470" mass="51900">MNPNQKIITIGSICMAIGTISLILQIGNIISIWVSHSIQTGSQNHTGICNQRIITYENNTWVNQTYVNISNTNVVAGKDTTSMILAGNSSLCPIRGWAIYSKDNSIRIGSKGDVFVIREPFISCSHLECRTFFLTQGALLNDKHSNGTVKDRSPYRALMSCPIGEAPSPYNSRFESVAWSASACHDGMGWLTIGISGPDDGAVAVLKYNGIITEIIKSWRKQILRTQESECVCVNGSCFTIMTDGPSDGPASYRIFKIEKGKITKSIELDAPNSHYEECSCYPDTGKVMCVCRDNWHGSNRPWVSFNQNLDYQIGYICSGVFGDNPRPKDGKGSCDPVNVDGADGVKGFSYRYGNGVWIGRTKSNSSRKGFEMIWDPNGWTDTDGNFLVKQDVVAMTDWSGYSGSFVQHPELTGLDCMRPCFWVELIRGRPREKTTIWTSGSSISFCGVNSDTVNWSWPDGAELPFTIDK</sequence>
<keyword id="KW-0106">Calcium</keyword>
<keyword id="KW-1015">Disulfide bond</keyword>
<keyword id="KW-0325">Glycoprotein</keyword>
<keyword id="KW-0326">Glycosidase</keyword>
<keyword id="KW-1032">Host cell membrane</keyword>
<keyword id="KW-1043">Host membrane</keyword>
<keyword id="KW-0378">Hydrolase</keyword>
<keyword id="KW-0472">Membrane</keyword>
<keyword id="KW-0479">Metal-binding</keyword>
<keyword id="KW-0735">Signal-anchor</keyword>
<keyword id="KW-0812">Transmembrane</keyword>
<keyword id="KW-1133">Transmembrane helix</keyword>
<keyword id="KW-0946">Virion</keyword>
<organism>
    <name type="scientific">Influenza A virus (strain A/USA:Albany/12/1951 H1N1)</name>
    <dbReference type="NCBI Taxonomy" id="425580"/>
    <lineage>
        <taxon>Viruses</taxon>
        <taxon>Riboviria</taxon>
        <taxon>Orthornavirae</taxon>
        <taxon>Negarnaviricota</taxon>
        <taxon>Polyploviricotina</taxon>
        <taxon>Insthoviricetes</taxon>
        <taxon>Articulavirales</taxon>
        <taxon>Orthomyxoviridae</taxon>
        <taxon>Alphainfluenzavirus</taxon>
        <taxon>Alphainfluenzavirus influenzae</taxon>
        <taxon>Influenza A virus</taxon>
    </lineage>
</organism>
<name>NRAM_I51A0</name>
<comment type="function">
    <text evidence="1">Catalyzes the removal of terminal sialic acid residues from viral and cellular glycoconjugates. Cleaves off the terminal sialic acids on the glycosylated HA during virus budding to facilitate virus release. Additionally helps virus spread through the circulation by further removing sialic acids from the cell surface. These cleavages prevent self-aggregation and ensure the efficient spread of the progeny virus from cell to cell. Otherwise, infection would be limited to one round of replication. Described as a receptor-destroying enzyme because it cleaves a terminal sialic acid from the cellular receptors. May facilitate viral invasion of the upper airways by cleaving the sialic acid moieties on the mucin of the airway epithelial cells. Likely to plays a role in the budding process through its association with lipid rafts during intracellular transport. May additionally display a raft-association independent effect on budding. Plays a role in the determination of host range restriction on replication and virulence. Sialidase activity in late endosome/lysosome traffic seems to enhance virus replication.</text>
</comment>
<comment type="catalytic activity">
    <reaction evidence="1">
        <text>Hydrolysis of alpha-(2-&gt;3)-, alpha-(2-&gt;6)-, alpha-(2-&gt;8)- glycosidic linkages of terminal sialic acid residues in oligosaccharides, glycoproteins, glycolipids, colominic acid and synthetic substrates.</text>
        <dbReference type="EC" id="3.2.1.18"/>
    </reaction>
</comment>
<comment type="cofactor">
    <cofactor evidence="1">
        <name>Ca(2+)</name>
        <dbReference type="ChEBI" id="CHEBI:29108"/>
    </cofactor>
</comment>
<comment type="activity regulation">
    <text evidence="1">Inhibited by the neuraminidase inhibitors zanamivir (Relenza) and oseltamivir (Tamiflu). These drugs interfere with the release of progeny virus from infected cells and are effective against all influenza strains. Resistance to neuraminidase inhibitors is quite rare.</text>
</comment>
<comment type="subunit">
    <text evidence="1">Homotetramer.</text>
</comment>
<comment type="subcellular location">
    <subcellularLocation>
        <location evidence="1">Virion membrane</location>
    </subcellularLocation>
    <subcellularLocation>
        <location evidence="1">Host apical cell membrane</location>
        <topology evidence="1">Single-pass type II membrane protein</topology>
    </subcellularLocation>
    <text evidence="1">Preferentially accumulates at the apical plasma membrane in infected polarized epithelial cells, which is the virus assembly site. Uses lipid rafts for cell surface transport and apical sorting. In the virion, forms a mushroom-shaped spike on the surface of the membrane.</text>
</comment>
<comment type="domain">
    <text evidence="1">Intact N-terminus is essential for virion morphogenesis. Possesses two apical sorting signals, one in the ectodomain, which is likely to be a glycan, and the other in the transmembrane domain. The transmembrane domain also plays a role in lipid raft association.</text>
</comment>
<comment type="PTM">
    <text evidence="1">N-glycosylated.</text>
</comment>
<comment type="miscellaneous">
    <text>The influenza A genome consist of 8 RNA segments. Genetic variation of hemagglutinin and/or neuraminidase genes results in the emergence of new influenza strains. The mechanism of variation can be the result of point mutations or the result of genetic reassortment between segments of two different strains.</text>
</comment>
<comment type="similarity">
    <text evidence="1">Belongs to the glycosyl hydrolase 34 family.</text>
</comment>
<gene>
    <name evidence="1" type="primary">NA</name>
</gene>
<dbReference type="EC" id="3.2.1.18" evidence="1"/>
<dbReference type="EMBL" id="CY021823">
    <property type="protein sequence ID" value="ABP49484.1"/>
    <property type="molecule type" value="Viral_cRNA"/>
</dbReference>
<dbReference type="SMR" id="A4U7A9"/>
<dbReference type="CAZy" id="GH34">
    <property type="family name" value="Glycoside Hydrolase Family 34"/>
</dbReference>
<dbReference type="GlyCosmos" id="A4U7A9">
    <property type="glycosylation" value="9 sites, No reported glycans"/>
</dbReference>
<dbReference type="PRO" id="PR:A4U7A9"/>
<dbReference type="Proteomes" id="UP000007556">
    <property type="component" value="Genome"/>
</dbReference>
<dbReference type="GO" id="GO:0020002">
    <property type="term" value="C:host cell plasma membrane"/>
    <property type="evidence" value="ECO:0007669"/>
    <property type="project" value="UniProtKB-SubCell"/>
</dbReference>
<dbReference type="GO" id="GO:0016020">
    <property type="term" value="C:membrane"/>
    <property type="evidence" value="ECO:0007669"/>
    <property type="project" value="UniProtKB-UniRule"/>
</dbReference>
<dbReference type="GO" id="GO:0055036">
    <property type="term" value="C:virion membrane"/>
    <property type="evidence" value="ECO:0007669"/>
    <property type="project" value="UniProtKB-SubCell"/>
</dbReference>
<dbReference type="GO" id="GO:0004308">
    <property type="term" value="F:exo-alpha-sialidase activity"/>
    <property type="evidence" value="ECO:0007669"/>
    <property type="project" value="UniProtKB-UniRule"/>
</dbReference>
<dbReference type="GO" id="GO:0046872">
    <property type="term" value="F:metal ion binding"/>
    <property type="evidence" value="ECO:0007669"/>
    <property type="project" value="UniProtKB-UniRule"/>
</dbReference>
<dbReference type="GO" id="GO:0005975">
    <property type="term" value="P:carbohydrate metabolic process"/>
    <property type="evidence" value="ECO:0007669"/>
    <property type="project" value="InterPro"/>
</dbReference>
<dbReference type="GO" id="GO:0046761">
    <property type="term" value="P:viral budding from plasma membrane"/>
    <property type="evidence" value="ECO:0007669"/>
    <property type="project" value="UniProtKB-UniRule"/>
</dbReference>
<dbReference type="CDD" id="cd15483">
    <property type="entry name" value="Influenza_NA"/>
    <property type="match status" value="1"/>
</dbReference>
<dbReference type="FunFam" id="2.120.10.10:FF:000001">
    <property type="entry name" value="Neuraminidase"/>
    <property type="match status" value="1"/>
</dbReference>
<dbReference type="Gene3D" id="2.120.10.10">
    <property type="match status" value="1"/>
</dbReference>
<dbReference type="HAMAP" id="MF_04071">
    <property type="entry name" value="INFV_NRAM"/>
    <property type="match status" value="1"/>
</dbReference>
<dbReference type="InterPro" id="IPR001860">
    <property type="entry name" value="Glyco_hydro_34"/>
</dbReference>
<dbReference type="InterPro" id="IPR033654">
    <property type="entry name" value="Sialidase_Influenza_A/B"/>
</dbReference>
<dbReference type="InterPro" id="IPR036278">
    <property type="entry name" value="Sialidase_sf"/>
</dbReference>
<dbReference type="Pfam" id="PF00064">
    <property type="entry name" value="Neur"/>
    <property type="match status" value="1"/>
</dbReference>
<dbReference type="SUPFAM" id="SSF50939">
    <property type="entry name" value="Sialidases"/>
    <property type="match status" value="1"/>
</dbReference>
<organismHost>
    <name type="scientific">Aves</name>
    <dbReference type="NCBI Taxonomy" id="8782"/>
</organismHost>
<organismHost>
    <name type="scientific">Homo sapiens</name>
    <name type="common">Human</name>
    <dbReference type="NCBI Taxonomy" id="9606"/>
</organismHost>
<organismHost>
    <name type="scientific">Sus scrofa</name>
    <name type="common">Pig</name>
    <dbReference type="NCBI Taxonomy" id="9823"/>
</organismHost>
<evidence type="ECO:0000255" key="1">
    <source>
        <dbReference type="HAMAP-Rule" id="MF_04071"/>
    </source>
</evidence>
<proteinExistence type="inferred from homology"/>
<protein>
    <recommendedName>
        <fullName evidence="1">Neuraminidase</fullName>
        <ecNumber evidence="1">3.2.1.18</ecNumber>
    </recommendedName>
</protein>
<feature type="chain" id="PRO_0000372969" description="Neuraminidase">
    <location>
        <begin position="1"/>
        <end position="470"/>
    </location>
</feature>
<feature type="topological domain" description="Intravirion" evidence="1">
    <location>
        <begin position="1"/>
        <end position="6"/>
    </location>
</feature>
<feature type="transmembrane region" description="Helical" evidence="1">
    <location>
        <begin position="7"/>
        <end position="27"/>
    </location>
</feature>
<feature type="topological domain" description="Virion surface" evidence="1">
    <location>
        <begin position="28"/>
        <end position="470"/>
    </location>
</feature>
<feature type="region of interest" description="Involved in apical transport and lipid raft association" evidence="1">
    <location>
        <begin position="11"/>
        <end position="33"/>
    </location>
</feature>
<feature type="region of interest" description="Hypervariable stalk region" evidence="1">
    <location>
        <begin position="36"/>
        <end position="90"/>
    </location>
</feature>
<feature type="region of interest" description="Head of neuraminidase" evidence="1">
    <location>
        <begin position="91"/>
        <end position="470"/>
    </location>
</feature>
<feature type="active site" description="Proton donor/acceptor" evidence="1">
    <location>
        <position position="151"/>
    </location>
</feature>
<feature type="active site" description="Nucleophile" evidence="1">
    <location>
        <position position="402"/>
    </location>
</feature>
<feature type="binding site" evidence="1">
    <location>
        <position position="118"/>
    </location>
    <ligand>
        <name>substrate</name>
    </ligand>
</feature>
<feature type="binding site" evidence="1">
    <location>
        <position position="152"/>
    </location>
    <ligand>
        <name>substrate</name>
    </ligand>
</feature>
<feature type="binding site" evidence="1">
    <location>
        <begin position="277"/>
        <end position="278"/>
    </location>
    <ligand>
        <name>substrate</name>
    </ligand>
</feature>
<feature type="binding site" evidence="1">
    <location>
        <position position="293"/>
    </location>
    <ligand>
        <name>substrate</name>
    </ligand>
</feature>
<feature type="binding site" evidence="1">
    <location>
        <position position="294"/>
    </location>
    <ligand>
        <name>Ca(2+)</name>
        <dbReference type="ChEBI" id="CHEBI:29108"/>
    </ligand>
</feature>
<feature type="binding site" evidence="1">
    <location>
        <position position="298"/>
    </location>
    <ligand>
        <name>Ca(2+)</name>
        <dbReference type="ChEBI" id="CHEBI:29108"/>
    </ligand>
</feature>
<feature type="binding site" evidence="1">
    <location>
        <position position="324"/>
    </location>
    <ligand>
        <name>Ca(2+)</name>
        <dbReference type="ChEBI" id="CHEBI:29108"/>
    </ligand>
</feature>
<feature type="binding site" evidence="1">
    <location>
        <position position="368"/>
    </location>
    <ligand>
        <name>substrate</name>
    </ligand>
</feature>
<feature type="glycosylation site" description="N-linked (GlcNAc...) asparagine; by host" evidence="1">
    <location>
        <position position="44"/>
    </location>
</feature>
<feature type="glycosylation site" description="N-linked (GlcNAc...) asparagine; by host" evidence="1">
    <location>
        <position position="58"/>
    </location>
</feature>
<feature type="glycosylation site" description="N-linked (GlcNAc...) asparagine; by host" evidence="1">
    <location>
        <position position="63"/>
    </location>
</feature>
<feature type="glycosylation site" description="N-linked (GlcNAc...) asparagine; by host" evidence="1">
    <location>
        <position position="68"/>
    </location>
</feature>
<feature type="glycosylation site" description="N-linked (GlcNAc...) asparagine; by host" evidence="1">
    <location>
        <position position="88"/>
    </location>
</feature>
<feature type="glycosylation site" description="N-linked (GlcNAc...) asparagine; by host" evidence="1">
    <location>
        <position position="146"/>
    </location>
</feature>
<feature type="glycosylation site" description="N-linked (GlcNAc...) asparagine; by host" evidence="1">
    <location>
        <position position="235"/>
    </location>
</feature>
<feature type="glycosylation site" description="N-linked (GlcNAc...) asparagine; by host" evidence="1">
    <location>
        <position position="365"/>
    </location>
</feature>
<feature type="glycosylation site" description="N-linked (GlcNAc...) asparagine; by host" evidence="1">
    <location>
        <position position="455"/>
    </location>
</feature>
<feature type="disulfide bond" evidence="1">
    <location>
        <begin position="92"/>
        <end position="417"/>
    </location>
</feature>
<feature type="disulfide bond" evidence="1">
    <location>
        <begin position="124"/>
        <end position="129"/>
    </location>
</feature>
<feature type="disulfide bond" evidence="1">
    <location>
        <begin position="184"/>
        <end position="231"/>
    </location>
</feature>
<feature type="disulfide bond" evidence="1">
    <location>
        <begin position="233"/>
        <end position="238"/>
    </location>
</feature>
<feature type="disulfide bond" evidence="1">
    <location>
        <begin position="279"/>
        <end position="292"/>
    </location>
</feature>
<feature type="disulfide bond" evidence="1">
    <location>
        <begin position="281"/>
        <end position="290"/>
    </location>
</feature>
<feature type="disulfide bond" evidence="1">
    <location>
        <begin position="318"/>
        <end position="335"/>
    </location>
</feature>
<feature type="disulfide bond" evidence="1">
    <location>
        <begin position="421"/>
        <end position="447"/>
    </location>
</feature>